<organism>
    <name type="scientific">Saccharomyces cerevisiae (strain ATCC 204508 / S288c)</name>
    <name type="common">Baker's yeast</name>
    <dbReference type="NCBI Taxonomy" id="559292"/>
    <lineage>
        <taxon>Eukaryota</taxon>
        <taxon>Fungi</taxon>
        <taxon>Dikarya</taxon>
        <taxon>Ascomycota</taxon>
        <taxon>Saccharomycotina</taxon>
        <taxon>Saccharomycetes</taxon>
        <taxon>Saccharomycetales</taxon>
        <taxon>Saccharomycetaceae</taxon>
        <taxon>Saccharomyces</taxon>
    </lineage>
</organism>
<name>KTR1_YEAST</name>
<gene>
    <name type="primary">KTR1</name>
    <name type="ordered locus">YOR099W</name>
    <name type="ORF">YOR3189W</name>
</gene>
<proteinExistence type="evidence at protein level"/>
<feature type="chain" id="PRO_0000208242" description="Alpha-1,2 mannosyltransferase KTR1">
    <location>
        <begin position="1"/>
        <end position="393"/>
    </location>
</feature>
<feature type="topological domain" description="Cytoplasmic" evidence="2">
    <location>
        <begin position="1"/>
        <end position="16"/>
    </location>
</feature>
<feature type="transmembrane region" description="Helical; Signal-anchor for type II membrane protein" evidence="2">
    <location>
        <begin position="17"/>
        <end position="34"/>
    </location>
</feature>
<feature type="topological domain" description="Lumenal" evidence="2">
    <location>
        <begin position="35"/>
        <end position="393"/>
    </location>
</feature>
<feature type="region of interest" description="Stem region" evidence="1">
    <location>
        <begin position="35"/>
        <end position="68"/>
    </location>
</feature>
<feature type="region of interest" description="Catalytic" evidence="1">
    <location>
        <begin position="69"/>
        <end position="393"/>
    </location>
</feature>
<feature type="active site" description="Nucleophile" evidence="2">
    <location>
        <position position="280"/>
    </location>
</feature>
<feature type="glycosylation site" description="N-linked (GlcNAc...) asparagine" evidence="2">
    <location>
        <position position="120"/>
    </location>
</feature>
<protein>
    <recommendedName>
        <fullName>Alpha-1,2 mannosyltransferase KTR1</fullName>
        <ecNumber>2.4.1.-</ecNumber>
    </recommendedName>
</protein>
<accession>P27810</accession>
<accession>D6W2G0</accession>
<comment type="function">
    <text>Mannosyltransferase that transfers a mannose residue from GDP-mannose to a range of acceptors in vitro, forming an alpha-(1-&gt;2)-D-mannosyl-D-mannose linkage.</text>
</comment>
<comment type="cofactor">
    <cofactor>
        <name>Mn(2+)</name>
        <dbReference type="ChEBI" id="CHEBI:29035"/>
    </cofactor>
</comment>
<comment type="pathway">
    <text>Protein modification; protein glycosylation.</text>
</comment>
<comment type="subcellular location">
    <subcellularLocation>
        <location>Golgi apparatus membrane</location>
        <topology>Single-pass type II membrane protein</topology>
    </subcellularLocation>
</comment>
<comment type="PTM">
    <text evidence="4">N-glycosylated.</text>
</comment>
<comment type="miscellaneous">
    <text evidence="3">Present with 5480 molecules/cell in log phase SD medium.</text>
</comment>
<comment type="similarity">
    <text evidence="5">Belongs to the glycosyltransferase 15 family.</text>
</comment>
<sequence length="393" mass="46022">MAKIMIPASKQPVYKKLGLLLVAVFTVYVFFHGAQYARGSAPSPKYSTVLSSGSGYKYSKVELPKYTGPREKATFVTLVRNRDLYSLAESIKSVEDRFNSKFNYDWVFLNDEEFTDEFKNVTSALVSGTTKYGVIPKEHWSFPEWIDEEKAAQVRKEMGEKRIIYGDSISYRHMCRFESGFFYRHPLMDDYDWYWRVEPDIKLHCDIDYDVFKFMKDNKKKYAFAISIKEYEATIPTLWETTRKFMEAHPELIHENNMLDFVSDDQGLSYNLCHFWSNFEIAALDLWRSPAYSAYFDYLDREGGFFYERWGDAPVHSIGAALFLDRSEIHHFGDIGYYHVPFHSCPIDTSIRLANKCDCDPSKDFTWHSYSCTTKFYNINKLPKPAGWQNHIG</sequence>
<evidence type="ECO:0000250" key="1"/>
<evidence type="ECO:0000255" key="2"/>
<evidence type="ECO:0000269" key="3">
    <source>
    </source>
</evidence>
<evidence type="ECO:0000269" key="4">
    <source>
    </source>
</evidence>
<evidence type="ECO:0000305" key="5"/>
<reference key="1">
    <citation type="journal article" date="1992" name="Genetics">
        <title>Yeast KRE2 defines a new gene family encoding probable secretory proteins, and is required for the correct N-glycosylation of proteins.</title>
        <authorList>
            <person name="Hill K."/>
            <person name="Boone C."/>
            <person name="Goebl M."/>
            <person name="Puccia R."/>
            <person name="Sdicu A.-M."/>
            <person name="Bussey H."/>
        </authorList>
    </citation>
    <scope>NUCLEOTIDE SEQUENCE [GENOMIC DNA]</scope>
</reference>
<reference key="2">
    <citation type="journal article" date="1997" name="Yeast">
        <title>DNA sequencing and analysis of 130 kb from yeast chromosome XV.</title>
        <authorList>
            <person name="Voss H."/>
            <person name="Benes V."/>
            <person name="Andrade M.A."/>
            <person name="Valencia A."/>
            <person name="Rechmann S."/>
            <person name="Teodoru C."/>
            <person name="Schwager C."/>
            <person name="Paces V."/>
            <person name="Sander C."/>
            <person name="Ansorge W."/>
        </authorList>
    </citation>
    <scope>NUCLEOTIDE SEQUENCE [GENOMIC DNA]</scope>
</reference>
<reference key="3">
    <citation type="journal article" date="1997" name="Nature">
        <title>The nucleotide sequence of Saccharomyces cerevisiae chromosome XV.</title>
        <authorList>
            <person name="Dujon B."/>
            <person name="Albermann K."/>
            <person name="Aldea M."/>
            <person name="Alexandraki D."/>
            <person name="Ansorge W."/>
            <person name="Arino J."/>
            <person name="Benes V."/>
            <person name="Bohn C."/>
            <person name="Bolotin-Fukuhara M."/>
            <person name="Bordonne R."/>
            <person name="Boyer J."/>
            <person name="Camasses A."/>
            <person name="Casamayor A."/>
            <person name="Casas C."/>
            <person name="Cheret G."/>
            <person name="Cziepluch C."/>
            <person name="Daignan-Fornier B."/>
            <person name="Dang V.-D."/>
            <person name="de Haan M."/>
            <person name="Delius H."/>
            <person name="Durand P."/>
            <person name="Fairhead C."/>
            <person name="Feldmann H."/>
            <person name="Gaillon L."/>
            <person name="Galisson F."/>
            <person name="Gamo F.-J."/>
            <person name="Gancedo C."/>
            <person name="Goffeau A."/>
            <person name="Goulding S.E."/>
            <person name="Grivell L.A."/>
            <person name="Habbig B."/>
            <person name="Hand N.J."/>
            <person name="Hani J."/>
            <person name="Hattenhorst U."/>
            <person name="Hebling U."/>
            <person name="Hernando Y."/>
            <person name="Herrero E."/>
            <person name="Heumann K."/>
            <person name="Hiesel R."/>
            <person name="Hilger F."/>
            <person name="Hofmann B."/>
            <person name="Hollenberg C.P."/>
            <person name="Hughes B."/>
            <person name="Jauniaux J.-C."/>
            <person name="Kalogeropoulos A."/>
            <person name="Katsoulou C."/>
            <person name="Kordes E."/>
            <person name="Lafuente M.J."/>
            <person name="Landt O."/>
            <person name="Louis E.J."/>
            <person name="Maarse A.C."/>
            <person name="Madania A."/>
            <person name="Mannhaupt G."/>
            <person name="Marck C."/>
            <person name="Martin R.P."/>
            <person name="Mewes H.-W."/>
            <person name="Michaux G."/>
            <person name="Paces V."/>
            <person name="Parle-McDermott A.G."/>
            <person name="Pearson B.M."/>
            <person name="Perrin A."/>
            <person name="Pettersson B."/>
            <person name="Poch O."/>
            <person name="Pohl T.M."/>
            <person name="Poirey R."/>
            <person name="Portetelle D."/>
            <person name="Pujol A."/>
            <person name="Purnelle B."/>
            <person name="Ramezani Rad M."/>
            <person name="Rechmann S."/>
            <person name="Schwager C."/>
            <person name="Schweizer M."/>
            <person name="Sor F."/>
            <person name="Sterky F."/>
            <person name="Tarassov I.A."/>
            <person name="Teodoru C."/>
            <person name="Tettelin H."/>
            <person name="Thierry A."/>
            <person name="Tobiasch E."/>
            <person name="Tzermia M."/>
            <person name="Uhlen M."/>
            <person name="Unseld M."/>
            <person name="Valens M."/>
            <person name="Vandenbol M."/>
            <person name="Vetter I."/>
            <person name="Vlcek C."/>
            <person name="Voet M."/>
            <person name="Volckaert G."/>
            <person name="Voss H."/>
            <person name="Wambutt R."/>
            <person name="Wedler H."/>
            <person name="Wiemann S."/>
            <person name="Winsor B."/>
            <person name="Wolfe K.H."/>
            <person name="Zollner A."/>
            <person name="Zumstein E."/>
            <person name="Kleine K."/>
        </authorList>
    </citation>
    <scope>NUCLEOTIDE SEQUENCE [LARGE SCALE GENOMIC DNA]</scope>
    <source>
        <strain>ATCC 204508 / S288c</strain>
    </source>
</reference>
<reference key="4">
    <citation type="journal article" date="2014" name="G3 (Bethesda)">
        <title>The reference genome sequence of Saccharomyces cerevisiae: Then and now.</title>
        <authorList>
            <person name="Engel S.R."/>
            <person name="Dietrich F.S."/>
            <person name="Fisk D.G."/>
            <person name="Binkley G."/>
            <person name="Balakrishnan R."/>
            <person name="Costanzo M.C."/>
            <person name="Dwight S.S."/>
            <person name="Hitz B.C."/>
            <person name="Karra K."/>
            <person name="Nash R.S."/>
            <person name="Weng S."/>
            <person name="Wong E.D."/>
            <person name="Lloyd P."/>
            <person name="Skrzypek M.S."/>
            <person name="Miyasato S.R."/>
            <person name="Simison M."/>
            <person name="Cherry J.M."/>
        </authorList>
    </citation>
    <scope>GENOME REANNOTATION</scope>
    <source>
        <strain>ATCC 204508 / S288c</strain>
    </source>
</reference>
<reference key="5">
    <citation type="journal article" date="1997" name="Biochem. J.">
        <title>Ktr1p is an alpha-1,2-mannosyltransferase of Saccharomyces cerevisiae. Comparison of the enzymic properties of soluble recombinant Ktr1p and Kre2p/Mnt1p produced in Pichia pastoris.</title>
        <authorList>
            <person name="Romero P.A."/>
            <person name="Lussier M."/>
            <person name="Sdicu A.-M."/>
            <person name="Bussey H."/>
        </authorList>
    </citation>
    <scope>CHARACTERIZATION</scope>
</reference>
<reference key="6">
    <citation type="journal article" date="2003" name="Nature">
        <title>Global analysis of protein expression in yeast.</title>
        <authorList>
            <person name="Ghaemmaghami S."/>
            <person name="Huh W.-K."/>
            <person name="Bower K."/>
            <person name="Howson R.W."/>
            <person name="Belle A."/>
            <person name="Dephoure N."/>
            <person name="O'Shea E.K."/>
            <person name="Weissman J.S."/>
        </authorList>
    </citation>
    <scope>LEVEL OF PROTEIN EXPRESSION [LARGE SCALE ANALYSIS]</scope>
</reference>
<reference key="7">
    <citation type="journal article" date="2009" name="Mol. Syst. Biol.">
        <title>Global analysis of the glycoproteome in Saccharomyces cerevisiae reveals new roles for protein glycosylation in eukaryotes.</title>
        <authorList>
            <person name="Kung L.A."/>
            <person name="Tao S.-C."/>
            <person name="Qian J."/>
            <person name="Smith M.G."/>
            <person name="Snyder M."/>
            <person name="Zhu H."/>
        </authorList>
    </citation>
    <scope>GLYCOSYLATION [LARGE SCALE ANALYSIS]</scope>
</reference>
<keyword id="KW-0325">Glycoprotein</keyword>
<keyword id="KW-0328">Glycosyltransferase</keyword>
<keyword id="KW-0333">Golgi apparatus</keyword>
<keyword id="KW-0464">Manganese</keyword>
<keyword id="KW-0472">Membrane</keyword>
<keyword id="KW-1185">Reference proteome</keyword>
<keyword id="KW-0735">Signal-anchor</keyword>
<keyword id="KW-0808">Transferase</keyword>
<keyword id="KW-0812">Transmembrane</keyword>
<keyword id="KW-1133">Transmembrane helix</keyword>
<dbReference type="EC" id="2.4.1.-"/>
<dbReference type="EMBL" id="X62941">
    <property type="protein sequence ID" value="CAA44713.1"/>
    <property type="molecule type" value="Genomic_DNA"/>
</dbReference>
<dbReference type="EMBL" id="X94335">
    <property type="protein sequence ID" value="CAA64021.1"/>
    <property type="molecule type" value="Genomic_DNA"/>
</dbReference>
<dbReference type="EMBL" id="Z75007">
    <property type="protein sequence ID" value="CAA99296.1"/>
    <property type="molecule type" value="Genomic_DNA"/>
</dbReference>
<dbReference type="EMBL" id="BK006948">
    <property type="protein sequence ID" value="DAA10876.1"/>
    <property type="molecule type" value="Genomic_DNA"/>
</dbReference>
<dbReference type="PIR" id="S61659">
    <property type="entry name" value="S61659"/>
</dbReference>
<dbReference type="RefSeq" id="NP_014742.1">
    <property type="nucleotide sequence ID" value="NM_001183518.1"/>
</dbReference>
<dbReference type="SMR" id="P27810"/>
<dbReference type="BioGRID" id="34497">
    <property type="interactions" value="152"/>
</dbReference>
<dbReference type="DIP" id="DIP-7181N"/>
<dbReference type="FunCoup" id="P27810">
    <property type="interactions" value="68"/>
</dbReference>
<dbReference type="IntAct" id="P27810">
    <property type="interactions" value="24"/>
</dbReference>
<dbReference type="MINT" id="P27810"/>
<dbReference type="STRING" id="4932.YOR099W"/>
<dbReference type="CAZy" id="GT15">
    <property type="family name" value="Glycosyltransferase Family 15"/>
</dbReference>
<dbReference type="GlyCosmos" id="P27810">
    <property type="glycosylation" value="1 site, No reported glycans"/>
</dbReference>
<dbReference type="GlyGen" id="P27810">
    <property type="glycosylation" value="1 site"/>
</dbReference>
<dbReference type="iPTMnet" id="P27810"/>
<dbReference type="PaxDb" id="4932-YOR099W"/>
<dbReference type="PeptideAtlas" id="P27810"/>
<dbReference type="EnsemblFungi" id="YOR099W_mRNA">
    <property type="protein sequence ID" value="YOR099W"/>
    <property type="gene ID" value="YOR099W"/>
</dbReference>
<dbReference type="GeneID" id="854266"/>
<dbReference type="KEGG" id="sce:YOR099W"/>
<dbReference type="AGR" id="SGD:S000005625"/>
<dbReference type="SGD" id="S000005625">
    <property type="gene designation" value="KTR1"/>
</dbReference>
<dbReference type="VEuPathDB" id="FungiDB:YOR099W"/>
<dbReference type="eggNOG" id="KOG4472">
    <property type="taxonomic scope" value="Eukaryota"/>
</dbReference>
<dbReference type="GeneTree" id="ENSGT00940000176287"/>
<dbReference type="HOGENOM" id="CLU_024327_4_1_1"/>
<dbReference type="InParanoid" id="P27810"/>
<dbReference type="OMA" id="GYRHNPF"/>
<dbReference type="OrthoDB" id="439943at2759"/>
<dbReference type="BioCyc" id="MetaCyc:G3O-33632-MONOMER"/>
<dbReference type="BioCyc" id="YEAST:G3O-33632-MONOMER"/>
<dbReference type="UniPathway" id="UPA00378"/>
<dbReference type="BioGRID-ORCS" id="854266">
    <property type="hits" value="0 hits in 10 CRISPR screens"/>
</dbReference>
<dbReference type="PRO" id="PR:P27810"/>
<dbReference type="Proteomes" id="UP000002311">
    <property type="component" value="Chromosome XV"/>
</dbReference>
<dbReference type="RNAct" id="P27810">
    <property type="molecule type" value="protein"/>
</dbReference>
<dbReference type="GO" id="GO:0000324">
    <property type="term" value="C:fungal-type vacuole"/>
    <property type="evidence" value="ECO:0007005"/>
    <property type="project" value="SGD"/>
</dbReference>
<dbReference type="GO" id="GO:0000329">
    <property type="term" value="C:fungal-type vacuole membrane"/>
    <property type="evidence" value="ECO:0007005"/>
    <property type="project" value="SGD"/>
</dbReference>
<dbReference type="GO" id="GO:0005794">
    <property type="term" value="C:Golgi apparatus"/>
    <property type="evidence" value="ECO:0000314"/>
    <property type="project" value="SGD"/>
</dbReference>
<dbReference type="GO" id="GO:0000139">
    <property type="term" value="C:Golgi membrane"/>
    <property type="evidence" value="ECO:0007669"/>
    <property type="project" value="UniProtKB-SubCell"/>
</dbReference>
<dbReference type="GO" id="GO:0000026">
    <property type="term" value="F:alpha-1,2-mannosyltransferase activity"/>
    <property type="evidence" value="ECO:0000314"/>
    <property type="project" value="SGD"/>
</dbReference>
<dbReference type="GO" id="GO:0000032">
    <property type="term" value="P:cell wall mannoprotein biosynthetic process"/>
    <property type="evidence" value="ECO:0000318"/>
    <property type="project" value="GO_Central"/>
</dbReference>
<dbReference type="GO" id="GO:0006487">
    <property type="term" value="P:protein N-linked glycosylation"/>
    <property type="evidence" value="ECO:0000316"/>
    <property type="project" value="SGD"/>
</dbReference>
<dbReference type="GO" id="GO:0006493">
    <property type="term" value="P:protein O-linked glycosylation"/>
    <property type="evidence" value="ECO:0000316"/>
    <property type="project" value="SGD"/>
</dbReference>
<dbReference type="FunFam" id="3.90.550.10:FF:000051">
    <property type="entry name" value="Alpha-1,2-mannosyltransferase (Ktr4)"/>
    <property type="match status" value="1"/>
</dbReference>
<dbReference type="Gene3D" id="3.90.550.10">
    <property type="entry name" value="Spore Coat Polysaccharide Biosynthesis Protein SpsA, Chain A"/>
    <property type="match status" value="1"/>
</dbReference>
<dbReference type="InterPro" id="IPR002685">
    <property type="entry name" value="Glyco_trans_15"/>
</dbReference>
<dbReference type="InterPro" id="IPR029044">
    <property type="entry name" value="Nucleotide-diphossugar_trans"/>
</dbReference>
<dbReference type="PANTHER" id="PTHR31121">
    <property type="entry name" value="ALPHA-1,2 MANNOSYLTRANSFERASE KTR1"/>
    <property type="match status" value="1"/>
</dbReference>
<dbReference type="PANTHER" id="PTHR31121:SF6">
    <property type="entry name" value="ALPHA-1,2 MANNOSYLTRANSFERASE KTR1"/>
    <property type="match status" value="1"/>
</dbReference>
<dbReference type="Pfam" id="PF01793">
    <property type="entry name" value="Glyco_transf_15"/>
    <property type="match status" value="1"/>
</dbReference>
<dbReference type="PIRSF" id="PIRSF018153">
    <property type="entry name" value="Glyco_trans_15"/>
    <property type="match status" value="1"/>
</dbReference>
<dbReference type="SUPFAM" id="SSF53448">
    <property type="entry name" value="Nucleotide-diphospho-sugar transferases"/>
    <property type="match status" value="1"/>
</dbReference>